<protein>
    <recommendedName>
        <fullName>D-fructose 1,6-bisphosphatase class 2/sedoheptulose 1,7-bisphosphatase</fullName>
        <shortName>FBPase class 2/SBPase</shortName>
        <ecNumber>3.1.3.11</ecNumber>
        <ecNumber>3.1.3.37</ecNumber>
    </recommendedName>
</protein>
<dbReference type="EC" id="3.1.3.11"/>
<dbReference type="EC" id="3.1.3.37"/>
<dbReference type="EMBL" id="CP000554">
    <property type="protein sequence ID" value="ABM78427.1"/>
    <property type="molecule type" value="Genomic_DNA"/>
</dbReference>
<dbReference type="RefSeq" id="WP_011826315.1">
    <property type="nucleotide sequence ID" value="NC_008820.1"/>
</dbReference>
<dbReference type="SMR" id="A2CAB7"/>
<dbReference type="STRING" id="59922.P9303_16831"/>
<dbReference type="KEGG" id="pmf:P9303_16831"/>
<dbReference type="HOGENOM" id="CLU_054938_0_0_3"/>
<dbReference type="BioCyc" id="PMAR59922:G1G80-1462-MONOMER"/>
<dbReference type="UniPathway" id="UPA00116"/>
<dbReference type="Proteomes" id="UP000002274">
    <property type="component" value="Chromosome"/>
</dbReference>
<dbReference type="GO" id="GO:0005829">
    <property type="term" value="C:cytosol"/>
    <property type="evidence" value="ECO:0007669"/>
    <property type="project" value="TreeGrafter"/>
</dbReference>
<dbReference type="GO" id="GO:0042132">
    <property type="term" value="F:fructose 1,6-bisphosphate 1-phosphatase activity"/>
    <property type="evidence" value="ECO:0007669"/>
    <property type="project" value="UniProtKB-EC"/>
</dbReference>
<dbReference type="GO" id="GO:0046872">
    <property type="term" value="F:metal ion binding"/>
    <property type="evidence" value="ECO:0007669"/>
    <property type="project" value="UniProtKB-KW"/>
</dbReference>
<dbReference type="GO" id="GO:0050278">
    <property type="term" value="F:sedoheptulose-bisphosphatase activity"/>
    <property type="evidence" value="ECO:0007669"/>
    <property type="project" value="UniProtKB-EC"/>
</dbReference>
<dbReference type="GO" id="GO:0030388">
    <property type="term" value="P:fructose 1,6-bisphosphate metabolic process"/>
    <property type="evidence" value="ECO:0007669"/>
    <property type="project" value="TreeGrafter"/>
</dbReference>
<dbReference type="GO" id="GO:0006094">
    <property type="term" value="P:gluconeogenesis"/>
    <property type="evidence" value="ECO:0007669"/>
    <property type="project" value="InterPro"/>
</dbReference>
<dbReference type="GO" id="GO:0006071">
    <property type="term" value="P:glycerol metabolic process"/>
    <property type="evidence" value="ECO:0007669"/>
    <property type="project" value="InterPro"/>
</dbReference>
<dbReference type="GO" id="GO:0019253">
    <property type="term" value="P:reductive pentose-phosphate cycle"/>
    <property type="evidence" value="ECO:0007669"/>
    <property type="project" value="UniProtKB-UniPathway"/>
</dbReference>
<dbReference type="CDD" id="cd01516">
    <property type="entry name" value="FBPase_glpX"/>
    <property type="match status" value="1"/>
</dbReference>
<dbReference type="FunFam" id="3.40.190.90:FF:000001">
    <property type="entry name" value="Fructose-1,6-bisphosphatase"/>
    <property type="match status" value="1"/>
</dbReference>
<dbReference type="Gene3D" id="3.40.190.90">
    <property type="match status" value="1"/>
</dbReference>
<dbReference type="Gene3D" id="3.30.540.10">
    <property type="entry name" value="Fructose-1,6-Bisphosphatase, subunit A, domain 1"/>
    <property type="match status" value="1"/>
</dbReference>
<dbReference type="InterPro" id="IPR004464">
    <property type="entry name" value="FBPase_class-2/SBPase"/>
</dbReference>
<dbReference type="NCBIfam" id="TIGR00330">
    <property type="entry name" value="glpX"/>
    <property type="match status" value="1"/>
</dbReference>
<dbReference type="PANTHER" id="PTHR30447:SF0">
    <property type="entry name" value="FRUCTOSE-1,6-BISPHOSPHATASE 1 CLASS 2-RELATED"/>
    <property type="match status" value="1"/>
</dbReference>
<dbReference type="PANTHER" id="PTHR30447">
    <property type="entry name" value="FRUCTOSE-1,6-BISPHOSPHATASE CLASS 2"/>
    <property type="match status" value="1"/>
</dbReference>
<dbReference type="Pfam" id="PF03320">
    <property type="entry name" value="FBPase_glpX"/>
    <property type="match status" value="1"/>
</dbReference>
<dbReference type="PIRSF" id="PIRSF004532">
    <property type="entry name" value="GlpX"/>
    <property type="match status" value="1"/>
</dbReference>
<dbReference type="SUPFAM" id="SSF56655">
    <property type="entry name" value="Carbohydrate phosphatase"/>
    <property type="match status" value="1"/>
</dbReference>
<evidence type="ECO:0000250" key="1"/>
<evidence type="ECO:0000305" key="2"/>
<keyword id="KW-0113">Calvin cycle</keyword>
<keyword id="KW-0119">Carbohydrate metabolism</keyword>
<keyword id="KW-0378">Hydrolase</keyword>
<keyword id="KW-0464">Manganese</keyword>
<keyword id="KW-0479">Metal-binding</keyword>
<comment type="function">
    <text evidence="1">Catalyzes the hydrolysis of fructose 1,6-bisphosphate (Fru 1,6-P2) and sedoheptulose 1,7-bisphosphate (Sed 1,7-P2) to fructose 6-phosphate and sedoheptulose 7-phosphate, respectively.</text>
</comment>
<comment type="catalytic activity">
    <reaction>
        <text>beta-D-fructose 1,6-bisphosphate + H2O = beta-D-fructose 6-phosphate + phosphate</text>
        <dbReference type="Rhea" id="RHEA:11064"/>
        <dbReference type="ChEBI" id="CHEBI:15377"/>
        <dbReference type="ChEBI" id="CHEBI:32966"/>
        <dbReference type="ChEBI" id="CHEBI:43474"/>
        <dbReference type="ChEBI" id="CHEBI:57634"/>
        <dbReference type="EC" id="3.1.3.11"/>
    </reaction>
</comment>
<comment type="catalytic activity">
    <reaction>
        <text>D-sedoheptulose 1,7-bisphosphate + H2O = D-sedoheptulose 7-phosphate + phosphate</text>
        <dbReference type="Rhea" id="RHEA:17461"/>
        <dbReference type="ChEBI" id="CHEBI:15377"/>
        <dbReference type="ChEBI" id="CHEBI:43474"/>
        <dbReference type="ChEBI" id="CHEBI:57483"/>
        <dbReference type="ChEBI" id="CHEBI:58335"/>
        <dbReference type="EC" id="3.1.3.37"/>
    </reaction>
</comment>
<comment type="cofactor">
    <cofactor evidence="1">
        <name>Mn(2+)</name>
        <dbReference type="ChEBI" id="CHEBI:29035"/>
    </cofactor>
</comment>
<comment type="pathway">
    <text>Carbohydrate biosynthesis; Calvin cycle.</text>
</comment>
<comment type="subunit">
    <text evidence="1">Homotetramer.</text>
</comment>
<comment type="similarity">
    <text evidence="2">Belongs to the FBPase class 2 family.</text>
</comment>
<organism>
    <name type="scientific">Prochlorococcus marinus (strain MIT 9303)</name>
    <dbReference type="NCBI Taxonomy" id="59922"/>
    <lineage>
        <taxon>Bacteria</taxon>
        <taxon>Bacillati</taxon>
        <taxon>Cyanobacteriota</taxon>
        <taxon>Cyanophyceae</taxon>
        <taxon>Synechococcales</taxon>
        <taxon>Prochlorococcaceae</taxon>
        <taxon>Prochlorococcus</taxon>
    </lineage>
</organism>
<sequence length="334" mass="35070">MDRTLIQEILEVVEQAAIASAHLTGLGKKDEADAAAVEAMRKRMGKIEMQGRIVIGEGERDEAPMLYIGEEVGSGSGPGVDFAVDPCEGTNLCANNQRGSMAVLAASDRGGLFNAPDFYMKKLAAPPSAKGKVDIRKSATENINILSQCLGLAVSELTIVVMDRARHKGLISEIRATGARVQPISDGDVQAAIACGFAGTGTHCLMGIGAAPEGVISAAAMRALGGHFQGQLVYDPAIAQTSEWADYTKEGNIARLNEMGITDVDKIYEAEELASGNNVVFAGSGITDGLLFHGVKFEPDCTRTSSLVISTLDNTARFTNTVHIKDGAKSIALS</sequence>
<name>FBSB_PROM3</name>
<proteinExistence type="inferred from homology"/>
<reference key="1">
    <citation type="journal article" date="2007" name="PLoS Genet.">
        <title>Patterns and implications of gene gain and loss in the evolution of Prochlorococcus.</title>
        <authorList>
            <person name="Kettler G.C."/>
            <person name="Martiny A.C."/>
            <person name="Huang K."/>
            <person name="Zucker J."/>
            <person name="Coleman M.L."/>
            <person name="Rodrigue S."/>
            <person name="Chen F."/>
            <person name="Lapidus A."/>
            <person name="Ferriera S."/>
            <person name="Johnson J."/>
            <person name="Steglich C."/>
            <person name="Church G.M."/>
            <person name="Richardson P."/>
            <person name="Chisholm S.W."/>
        </authorList>
    </citation>
    <scope>NUCLEOTIDE SEQUENCE [LARGE SCALE GENOMIC DNA]</scope>
    <source>
        <strain>MIT 9303</strain>
    </source>
</reference>
<feature type="chain" id="PRO_0000342717" description="D-fructose 1,6-bisphosphatase class 2/sedoheptulose 1,7-bisphosphatase">
    <location>
        <begin position="1"/>
        <end position="334"/>
    </location>
</feature>
<feature type="binding site" evidence="1">
    <location>
        <position position="33"/>
    </location>
    <ligand>
        <name>Mn(2+)</name>
        <dbReference type="ChEBI" id="CHEBI:29035"/>
        <label>1</label>
    </ligand>
</feature>
<feature type="binding site" evidence="1">
    <location>
        <position position="57"/>
    </location>
    <ligand>
        <name>Mn(2+)</name>
        <dbReference type="ChEBI" id="CHEBI:29035"/>
        <label>1</label>
    </ligand>
</feature>
<feature type="binding site" evidence="1">
    <location>
        <position position="85"/>
    </location>
    <ligand>
        <name>Mn(2+)</name>
        <dbReference type="ChEBI" id="CHEBI:29035"/>
        <label>2</label>
    </ligand>
</feature>
<feature type="binding site" evidence="1">
    <location>
        <begin position="88"/>
        <end position="90"/>
    </location>
    <ligand>
        <name>substrate</name>
    </ligand>
</feature>
<feature type="binding site" evidence="1">
    <location>
        <position position="88"/>
    </location>
    <ligand>
        <name>Mn(2+)</name>
        <dbReference type="ChEBI" id="CHEBI:29035"/>
        <label>2</label>
    </ligand>
</feature>
<feature type="binding site" evidence="1">
    <location>
        <position position="119"/>
    </location>
    <ligand>
        <name>substrate</name>
    </ligand>
</feature>
<feature type="binding site" evidence="1">
    <location>
        <begin position="164"/>
        <end position="166"/>
    </location>
    <ligand>
        <name>substrate</name>
    </ligand>
</feature>
<feature type="binding site" evidence="1">
    <location>
        <begin position="186"/>
        <end position="188"/>
    </location>
    <ligand>
        <name>substrate</name>
    </ligand>
</feature>
<feature type="binding site" evidence="1">
    <location>
        <position position="213"/>
    </location>
    <ligand>
        <name>Mn(2+)</name>
        <dbReference type="ChEBI" id="CHEBI:29035"/>
        <label>2</label>
    </ligand>
</feature>
<gene>
    <name type="ordered locus">P9303_16831</name>
</gene>
<accession>A2CAB7</accession>